<organism>
    <name type="scientific">Thermosipho melanesiensis (strain DSM 12029 / CIP 104789 / BI429)</name>
    <dbReference type="NCBI Taxonomy" id="391009"/>
    <lineage>
        <taxon>Bacteria</taxon>
        <taxon>Thermotogati</taxon>
        <taxon>Thermotogota</taxon>
        <taxon>Thermotogae</taxon>
        <taxon>Thermotogales</taxon>
        <taxon>Fervidobacteriaceae</taxon>
        <taxon>Thermosipho</taxon>
    </lineage>
</organism>
<sequence length="161" mass="18823">MDMFEINITSVIQLMSFFLLLYILKKFLYDKYFEVMDARKEKIEGEIKKAEQLRKEAEELKKEAKGELIKIRESADSIIKKAKEEAEEIVNNAKKKAEAEAEKILVSAKEEIKNEREAMIKEVEQRVGEIAVVLAMKILKGTLDEKAKREYLMKILKEHEK</sequence>
<keyword id="KW-0066">ATP synthesis</keyword>
<keyword id="KW-0997">Cell inner membrane</keyword>
<keyword id="KW-1003">Cell membrane</keyword>
<keyword id="KW-0138">CF(0)</keyword>
<keyword id="KW-0375">Hydrogen ion transport</keyword>
<keyword id="KW-0406">Ion transport</keyword>
<keyword id="KW-0472">Membrane</keyword>
<keyword id="KW-0812">Transmembrane</keyword>
<keyword id="KW-1133">Transmembrane helix</keyword>
<keyword id="KW-0813">Transport</keyword>
<name>ATPF_THEM4</name>
<gene>
    <name evidence="1" type="primary">atpF</name>
    <name type="ordered locus">Tmel_0294</name>
</gene>
<reference key="1">
    <citation type="submission" date="2007-05" db="EMBL/GenBank/DDBJ databases">
        <title>Complete sequence of Thermosipho melanesiensis BI429.</title>
        <authorList>
            <consortium name="US DOE Joint Genome Institute"/>
            <person name="Copeland A."/>
            <person name="Lucas S."/>
            <person name="Lapidus A."/>
            <person name="Barry K."/>
            <person name="Glavina del Rio T."/>
            <person name="Dalin E."/>
            <person name="Tice H."/>
            <person name="Pitluck S."/>
            <person name="Chertkov O."/>
            <person name="Brettin T."/>
            <person name="Bruce D."/>
            <person name="Detter J.C."/>
            <person name="Han C."/>
            <person name="Schmutz J."/>
            <person name="Larimer F."/>
            <person name="Land M."/>
            <person name="Hauser L."/>
            <person name="Kyrpides N."/>
            <person name="Mikhailova N."/>
            <person name="Nelson K."/>
            <person name="Gogarten J.P."/>
            <person name="Noll K."/>
            <person name="Richardson P."/>
        </authorList>
    </citation>
    <scope>NUCLEOTIDE SEQUENCE [LARGE SCALE GENOMIC DNA]</scope>
    <source>
        <strain>DSM 12029 / CIP 104789 / BI429</strain>
    </source>
</reference>
<evidence type="ECO:0000255" key="1">
    <source>
        <dbReference type="HAMAP-Rule" id="MF_01398"/>
    </source>
</evidence>
<protein>
    <recommendedName>
        <fullName evidence="1">ATP synthase subunit b</fullName>
    </recommendedName>
    <alternativeName>
        <fullName evidence="1">ATP synthase F(0) sector subunit b</fullName>
    </alternativeName>
    <alternativeName>
        <fullName evidence="1">ATPase subunit I</fullName>
    </alternativeName>
    <alternativeName>
        <fullName evidence="1">F-type ATPase subunit b</fullName>
        <shortName evidence="1">F-ATPase subunit b</shortName>
    </alternativeName>
</protein>
<comment type="function">
    <text evidence="1">F(1)F(0) ATP synthase produces ATP from ADP in the presence of a proton or sodium gradient. F-type ATPases consist of two structural domains, F(1) containing the extramembraneous catalytic core and F(0) containing the membrane proton channel, linked together by a central stalk and a peripheral stalk. During catalysis, ATP synthesis in the catalytic domain of F(1) is coupled via a rotary mechanism of the central stalk subunits to proton translocation.</text>
</comment>
<comment type="function">
    <text evidence="1">Component of the F(0) channel, it forms part of the peripheral stalk, linking F(1) to F(0).</text>
</comment>
<comment type="subunit">
    <text evidence="1">F-type ATPases have 2 components, F(1) - the catalytic core - and F(0) - the membrane proton channel. F(1) has five subunits: alpha(3), beta(3), gamma(1), delta(1), epsilon(1). F(0) has three main subunits: a(1), b(2) and c(10-14). The alpha and beta chains form an alternating ring which encloses part of the gamma chain. F(1) is attached to F(0) by a central stalk formed by the gamma and epsilon chains, while a peripheral stalk is formed by the delta and b chains.</text>
</comment>
<comment type="subcellular location">
    <subcellularLocation>
        <location evidence="1">Cell inner membrane</location>
        <topology evidence="1">Single-pass membrane protein</topology>
    </subcellularLocation>
</comment>
<comment type="similarity">
    <text evidence="1">Belongs to the ATPase B chain family.</text>
</comment>
<dbReference type="EMBL" id="CP000716">
    <property type="protein sequence ID" value="ABR30166.1"/>
    <property type="molecule type" value="Genomic_DNA"/>
</dbReference>
<dbReference type="RefSeq" id="WP_012056527.1">
    <property type="nucleotide sequence ID" value="NC_009616.1"/>
</dbReference>
<dbReference type="SMR" id="A6LJR5"/>
<dbReference type="STRING" id="391009.Tmel_0294"/>
<dbReference type="KEGG" id="tme:Tmel_0294"/>
<dbReference type="eggNOG" id="COG0711">
    <property type="taxonomic scope" value="Bacteria"/>
</dbReference>
<dbReference type="HOGENOM" id="CLU_079215_4_5_0"/>
<dbReference type="OrthoDB" id="47427at2"/>
<dbReference type="Proteomes" id="UP000001110">
    <property type="component" value="Chromosome"/>
</dbReference>
<dbReference type="GO" id="GO:0005886">
    <property type="term" value="C:plasma membrane"/>
    <property type="evidence" value="ECO:0007669"/>
    <property type="project" value="UniProtKB-SubCell"/>
</dbReference>
<dbReference type="GO" id="GO:0045259">
    <property type="term" value="C:proton-transporting ATP synthase complex"/>
    <property type="evidence" value="ECO:0007669"/>
    <property type="project" value="UniProtKB-KW"/>
</dbReference>
<dbReference type="GO" id="GO:0046933">
    <property type="term" value="F:proton-transporting ATP synthase activity, rotational mechanism"/>
    <property type="evidence" value="ECO:0007669"/>
    <property type="project" value="UniProtKB-UniRule"/>
</dbReference>
<dbReference type="GO" id="GO:0046961">
    <property type="term" value="F:proton-transporting ATPase activity, rotational mechanism"/>
    <property type="evidence" value="ECO:0007669"/>
    <property type="project" value="TreeGrafter"/>
</dbReference>
<dbReference type="CDD" id="cd06503">
    <property type="entry name" value="ATP-synt_Fo_b"/>
    <property type="match status" value="1"/>
</dbReference>
<dbReference type="Gene3D" id="1.20.5.620">
    <property type="entry name" value="F1F0 ATP synthase subunit B, membrane domain"/>
    <property type="match status" value="1"/>
</dbReference>
<dbReference type="HAMAP" id="MF_01398">
    <property type="entry name" value="ATP_synth_b_bprime"/>
    <property type="match status" value="1"/>
</dbReference>
<dbReference type="InterPro" id="IPR028987">
    <property type="entry name" value="ATP_synth_B-like_membr_sf"/>
</dbReference>
<dbReference type="InterPro" id="IPR002146">
    <property type="entry name" value="ATP_synth_b/b'su_bac/chlpt"/>
</dbReference>
<dbReference type="InterPro" id="IPR005864">
    <property type="entry name" value="ATP_synth_F0_bsu_bac"/>
</dbReference>
<dbReference type="InterPro" id="IPR050059">
    <property type="entry name" value="ATP_synthase_B_chain"/>
</dbReference>
<dbReference type="NCBIfam" id="TIGR01144">
    <property type="entry name" value="ATP_synt_b"/>
    <property type="match status" value="1"/>
</dbReference>
<dbReference type="PANTHER" id="PTHR33445:SF1">
    <property type="entry name" value="ATP SYNTHASE SUBUNIT B"/>
    <property type="match status" value="1"/>
</dbReference>
<dbReference type="PANTHER" id="PTHR33445">
    <property type="entry name" value="ATP SYNTHASE SUBUNIT B', CHLOROPLASTIC"/>
    <property type="match status" value="1"/>
</dbReference>
<dbReference type="Pfam" id="PF00430">
    <property type="entry name" value="ATP-synt_B"/>
    <property type="match status" value="1"/>
</dbReference>
<dbReference type="SUPFAM" id="SSF81573">
    <property type="entry name" value="F1F0 ATP synthase subunit B, membrane domain"/>
    <property type="match status" value="1"/>
</dbReference>
<proteinExistence type="inferred from homology"/>
<feature type="chain" id="PRO_0000368840" description="ATP synthase subunit b">
    <location>
        <begin position="1"/>
        <end position="161"/>
    </location>
</feature>
<feature type="transmembrane region" description="Helical" evidence="1">
    <location>
        <begin position="10"/>
        <end position="29"/>
    </location>
</feature>
<accession>A6LJR5</accession>